<comment type="function">
    <text evidence="1">Catalyzes ATP-dependent phosphorylation of adenosylcobinamide and addition of GMP to adenosylcobinamide phosphate.</text>
</comment>
<comment type="catalytic activity">
    <reaction>
        <text>adenosylcob(III)inamide + GTP = adenosylcob(III)inamide phosphate + GDP + H(+)</text>
        <dbReference type="Rhea" id="RHEA:15765"/>
        <dbReference type="ChEBI" id="CHEBI:2480"/>
        <dbReference type="ChEBI" id="CHEBI:15378"/>
        <dbReference type="ChEBI" id="CHEBI:37565"/>
        <dbReference type="ChEBI" id="CHEBI:58189"/>
        <dbReference type="ChEBI" id="CHEBI:58502"/>
        <dbReference type="EC" id="2.7.1.156"/>
    </reaction>
</comment>
<comment type="catalytic activity">
    <reaction>
        <text>adenosylcob(III)inamide + ATP = adenosylcob(III)inamide phosphate + ADP + H(+)</text>
        <dbReference type="Rhea" id="RHEA:15769"/>
        <dbReference type="ChEBI" id="CHEBI:2480"/>
        <dbReference type="ChEBI" id="CHEBI:15378"/>
        <dbReference type="ChEBI" id="CHEBI:30616"/>
        <dbReference type="ChEBI" id="CHEBI:58502"/>
        <dbReference type="ChEBI" id="CHEBI:456216"/>
        <dbReference type="EC" id="2.7.1.156"/>
    </reaction>
</comment>
<comment type="catalytic activity">
    <reaction>
        <text>adenosylcob(III)inamide phosphate + GTP + H(+) = adenosylcob(III)inamide-GDP + diphosphate</text>
        <dbReference type="Rhea" id="RHEA:22712"/>
        <dbReference type="ChEBI" id="CHEBI:15378"/>
        <dbReference type="ChEBI" id="CHEBI:33019"/>
        <dbReference type="ChEBI" id="CHEBI:37565"/>
        <dbReference type="ChEBI" id="CHEBI:58502"/>
        <dbReference type="ChEBI" id="CHEBI:60487"/>
        <dbReference type="EC" id="2.7.7.62"/>
    </reaction>
</comment>
<comment type="pathway">
    <text>Cofactor biosynthesis; adenosylcobalamin biosynthesis; adenosylcobalamin from cob(II)yrinate a,c-diamide: step 5/7.</text>
</comment>
<comment type="pathway">
    <text>Cofactor biosynthesis; adenosylcobalamin biosynthesis; adenosylcobalamin from cob(II)yrinate a,c-diamide: step 6/7.</text>
</comment>
<comment type="subunit">
    <text evidence="1">Homodimer.</text>
</comment>
<comment type="similarity">
    <text evidence="2">Belongs to the CobU/CobP family.</text>
</comment>
<reference key="1">
    <citation type="journal article" date="2000" name="Nature">
        <title>Complete genome sequence of Pseudomonas aeruginosa PAO1, an opportunistic pathogen.</title>
        <authorList>
            <person name="Stover C.K."/>
            <person name="Pham X.-Q.T."/>
            <person name="Erwin A.L."/>
            <person name="Mizoguchi S.D."/>
            <person name="Warrener P."/>
            <person name="Hickey M.J."/>
            <person name="Brinkman F.S.L."/>
            <person name="Hufnagle W.O."/>
            <person name="Kowalik D.J."/>
            <person name="Lagrou M."/>
            <person name="Garber R.L."/>
            <person name="Goltry L."/>
            <person name="Tolentino E."/>
            <person name="Westbrock-Wadman S."/>
            <person name="Yuan Y."/>
            <person name="Brody L.L."/>
            <person name="Coulter S.N."/>
            <person name="Folger K.R."/>
            <person name="Kas A."/>
            <person name="Larbig K."/>
            <person name="Lim R.M."/>
            <person name="Smith K.A."/>
            <person name="Spencer D.H."/>
            <person name="Wong G.K.-S."/>
            <person name="Wu Z."/>
            <person name="Paulsen I.T."/>
            <person name="Reizer J."/>
            <person name="Saier M.H. Jr."/>
            <person name="Hancock R.E.W."/>
            <person name="Lory S."/>
            <person name="Olson M.V."/>
        </authorList>
    </citation>
    <scope>NUCLEOTIDE SEQUENCE [LARGE SCALE GENOMIC DNA]</scope>
    <source>
        <strain>ATCC 15692 / DSM 22644 / CIP 104116 / JCM 14847 / LMG 12228 / 1C / PRS 101 / PAO1</strain>
    </source>
</reference>
<dbReference type="EC" id="2.7.1.156"/>
<dbReference type="EC" id="2.7.7.62"/>
<dbReference type="EMBL" id="AE004091">
    <property type="protein sequence ID" value="AAG04667.1"/>
    <property type="molecule type" value="Genomic_DNA"/>
</dbReference>
<dbReference type="PIR" id="D83486">
    <property type="entry name" value="D83486"/>
</dbReference>
<dbReference type="RefSeq" id="NP_249969.1">
    <property type="nucleotide sequence ID" value="NC_002516.2"/>
</dbReference>
<dbReference type="SMR" id="Q9I466"/>
<dbReference type="FunCoup" id="Q9I466">
    <property type="interactions" value="254"/>
</dbReference>
<dbReference type="STRING" id="208964.PA1278"/>
<dbReference type="PaxDb" id="208964-PA1278"/>
<dbReference type="GeneID" id="881443"/>
<dbReference type="KEGG" id="pae:PA1278"/>
<dbReference type="PATRIC" id="fig|208964.12.peg.1328"/>
<dbReference type="PseudoCAP" id="PA1278"/>
<dbReference type="HOGENOM" id="CLU_094161_0_1_6"/>
<dbReference type="InParanoid" id="Q9I466"/>
<dbReference type="OrthoDB" id="9788370at2"/>
<dbReference type="PhylomeDB" id="Q9I466"/>
<dbReference type="BioCyc" id="PAER208964:G1FZ6-1303-MONOMER"/>
<dbReference type="UniPathway" id="UPA00148">
    <property type="reaction ID" value="UER00236"/>
</dbReference>
<dbReference type="UniPathway" id="UPA00148">
    <property type="reaction ID" value="UER00237"/>
</dbReference>
<dbReference type="Proteomes" id="UP000002438">
    <property type="component" value="Chromosome"/>
</dbReference>
<dbReference type="GO" id="GO:0043752">
    <property type="term" value="F:adenosylcobinamide kinase activity"/>
    <property type="evidence" value="ECO:0007669"/>
    <property type="project" value="UniProtKB-EC"/>
</dbReference>
<dbReference type="GO" id="GO:0005524">
    <property type="term" value="F:ATP binding"/>
    <property type="evidence" value="ECO:0007669"/>
    <property type="project" value="UniProtKB-KW"/>
</dbReference>
<dbReference type="GO" id="GO:0008820">
    <property type="term" value="F:cobinamide phosphate guanylyltransferase activity"/>
    <property type="evidence" value="ECO:0007669"/>
    <property type="project" value="UniProtKB-EC"/>
</dbReference>
<dbReference type="GO" id="GO:0005525">
    <property type="term" value="F:GTP binding"/>
    <property type="evidence" value="ECO:0007669"/>
    <property type="project" value="UniProtKB-KW"/>
</dbReference>
<dbReference type="GO" id="GO:0009236">
    <property type="term" value="P:cobalamin biosynthetic process"/>
    <property type="evidence" value="ECO:0007669"/>
    <property type="project" value="UniProtKB-UniPathway"/>
</dbReference>
<dbReference type="CDD" id="cd00544">
    <property type="entry name" value="CobU"/>
    <property type="match status" value="1"/>
</dbReference>
<dbReference type="FunFam" id="3.40.50.300:FF:001825">
    <property type="entry name" value="Bifunctional adenosylcobalamin biosynthesis protein"/>
    <property type="match status" value="1"/>
</dbReference>
<dbReference type="Gene3D" id="3.40.50.300">
    <property type="entry name" value="P-loop containing nucleotide triphosphate hydrolases"/>
    <property type="match status" value="1"/>
</dbReference>
<dbReference type="InterPro" id="IPR003203">
    <property type="entry name" value="CobU/CobP"/>
</dbReference>
<dbReference type="InterPro" id="IPR027417">
    <property type="entry name" value="P-loop_NTPase"/>
</dbReference>
<dbReference type="NCBIfam" id="NF004469">
    <property type="entry name" value="PRK05800.1"/>
    <property type="match status" value="1"/>
</dbReference>
<dbReference type="PANTHER" id="PTHR34848">
    <property type="match status" value="1"/>
</dbReference>
<dbReference type="PANTHER" id="PTHR34848:SF1">
    <property type="entry name" value="BIFUNCTIONAL ADENOSYLCOBALAMIN BIOSYNTHESIS PROTEIN COBU"/>
    <property type="match status" value="1"/>
</dbReference>
<dbReference type="Pfam" id="PF02283">
    <property type="entry name" value="CobU"/>
    <property type="match status" value="1"/>
</dbReference>
<dbReference type="PIRSF" id="PIRSF006135">
    <property type="entry name" value="CobU"/>
    <property type="match status" value="1"/>
</dbReference>
<dbReference type="SUPFAM" id="SSF52540">
    <property type="entry name" value="P-loop containing nucleoside triphosphate hydrolases"/>
    <property type="match status" value="1"/>
</dbReference>
<accession>Q9I466</accession>
<proteinExistence type="inferred from homology"/>
<feature type="chain" id="PRO_0000287789" description="Bifunctional adenosylcobalamin biosynthesis protein CobP">
    <location>
        <begin position="1"/>
        <end position="173"/>
    </location>
</feature>
<feature type="active site" description="GMP-histidine intermediate" evidence="1">
    <location>
        <position position="48"/>
    </location>
</feature>
<feature type="binding site" evidence="1">
    <location>
        <begin position="7"/>
        <end position="14"/>
    </location>
    <ligand>
        <name>GTP</name>
        <dbReference type="ChEBI" id="CHEBI:37565"/>
    </ligand>
</feature>
<feature type="binding site" evidence="1">
    <location>
        <begin position="32"/>
        <end position="34"/>
    </location>
    <ligand>
        <name>GTP</name>
        <dbReference type="ChEBI" id="CHEBI:37565"/>
    </ligand>
</feature>
<feature type="binding site" evidence="1">
    <location>
        <begin position="49"/>
        <end position="52"/>
    </location>
    <ligand>
        <name>GTP</name>
        <dbReference type="ChEBI" id="CHEBI:37565"/>
    </ligand>
</feature>
<feature type="binding site" evidence="1">
    <location>
        <position position="60"/>
    </location>
    <ligand>
        <name>GTP</name>
        <dbReference type="ChEBI" id="CHEBI:37565"/>
    </ligand>
</feature>
<feature type="binding site" evidence="1">
    <location>
        <position position="82"/>
    </location>
    <ligand>
        <name>GTP</name>
        <dbReference type="ChEBI" id="CHEBI:37565"/>
    </ligand>
</feature>
<sequence>MRDLILGGARSGKSRLAERLAAESGLAVSYIATAQAGDGEMGRRIAEHRARRPAHWRTLEEPLALAATLRSEAEAGRCLLVDCLTLWLTNLLLCDDPQRLDGEREALLECLGELPGRIILVSNETGLGVVPLGELSRRYVDEAGWLHQAIAERCERVTFTVAGLPMPLKGEPL</sequence>
<evidence type="ECO:0000250" key="1"/>
<evidence type="ECO:0000305" key="2"/>
<organism>
    <name type="scientific">Pseudomonas aeruginosa (strain ATCC 15692 / DSM 22644 / CIP 104116 / JCM 14847 / LMG 12228 / 1C / PRS 101 / PAO1)</name>
    <dbReference type="NCBI Taxonomy" id="208964"/>
    <lineage>
        <taxon>Bacteria</taxon>
        <taxon>Pseudomonadati</taxon>
        <taxon>Pseudomonadota</taxon>
        <taxon>Gammaproteobacteria</taxon>
        <taxon>Pseudomonadales</taxon>
        <taxon>Pseudomonadaceae</taxon>
        <taxon>Pseudomonas</taxon>
    </lineage>
</organism>
<name>COBP_PSEAE</name>
<protein>
    <recommendedName>
        <fullName>Bifunctional adenosylcobalamin biosynthesis protein CobP</fullName>
    </recommendedName>
    <alternativeName>
        <fullName>Adenosylcobinamide kinase</fullName>
        <ecNumber>2.7.1.156</ecNumber>
    </alternativeName>
    <alternativeName>
        <fullName>Adenosylcobinamide-phosphate guanylyltransferase</fullName>
        <ecNumber>2.7.7.62</ecNumber>
    </alternativeName>
</protein>
<keyword id="KW-0067">ATP-binding</keyword>
<keyword id="KW-0169">Cobalamin biosynthesis</keyword>
<keyword id="KW-0342">GTP-binding</keyword>
<keyword id="KW-0418">Kinase</keyword>
<keyword id="KW-0547">Nucleotide-binding</keyword>
<keyword id="KW-1185">Reference proteome</keyword>
<keyword id="KW-0808">Transferase</keyword>
<gene>
    <name type="primary">cobP</name>
    <name type="ordered locus">PA1278</name>
</gene>